<reference key="1">
    <citation type="journal article" date="2004" name="J. Bacteriol.">
        <title>The genome sequence of Mycoplasma hyopneumoniae strain 232, the agent of swine mycoplasmosis.</title>
        <authorList>
            <person name="Minion F.C."/>
            <person name="Lefkowitz E.J."/>
            <person name="Madsen M.L."/>
            <person name="Cleary B.J."/>
            <person name="Swartzell S.M."/>
            <person name="Mahairas G.G."/>
        </authorList>
    </citation>
    <scope>NUCLEOTIDE SEQUENCE [LARGE SCALE GENOMIC DNA]</scope>
    <source>
        <strain>232</strain>
    </source>
</reference>
<name>HRCA_MESH2</name>
<dbReference type="EMBL" id="AE017332">
    <property type="protein sequence ID" value="AAV27353.1"/>
    <property type="molecule type" value="Genomic_DNA"/>
</dbReference>
<dbReference type="RefSeq" id="WP_011205849.1">
    <property type="nucleotide sequence ID" value="NC_006360.1"/>
</dbReference>
<dbReference type="SMR" id="Q602E0"/>
<dbReference type="GeneID" id="41334297"/>
<dbReference type="KEGG" id="mhy:mhp010"/>
<dbReference type="eggNOG" id="COG1420">
    <property type="taxonomic scope" value="Bacteria"/>
</dbReference>
<dbReference type="HOGENOM" id="CLU_050019_1_0_14"/>
<dbReference type="PhylomeDB" id="Q602E0"/>
<dbReference type="Proteomes" id="UP000006822">
    <property type="component" value="Chromosome"/>
</dbReference>
<dbReference type="GO" id="GO:0003677">
    <property type="term" value="F:DNA binding"/>
    <property type="evidence" value="ECO:0007669"/>
    <property type="project" value="InterPro"/>
</dbReference>
<dbReference type="GO" id="GO:0045892">
    <property type="term" value="P:negative regulation of DNA-templated transcription"/>
    <property type="evidence" value="ECO:0007669"/>
    <property type="project" value="UniProtKB-UniRule"/>
</dbReference>
<dbReference type="Gene3D" id="1.10.10.10">
    <property type="entry name" value="Winged helix-like DNA-binding domain superfamily/Winged helix DNA-binding domain"/>
    <property type="match status" value="1"/>
</dbReference>
<dbReference type="HAMAP" id="MF_00081">
    <property type="entry name" value="HrcA"/>
    <property type="match status" value="1"/>
</dbReference>
<dbReference type="InterPro" id="IPR002571">
    <property type="entry name" value="HrcA"/>
</dbReference>
<dbReference type="InterPro" id="IPR021153">
    <property type="entry name" value="HrcA_C"/>
</dbReference>
<dbReference type="InterPro" id="IPR036388">
    <property type="entry name" value="WH-like_DNA-bd_sf"/>
</dbReference>
<dbReference type="InterPro" id="IPR036390">
    <property type="entry name" value="WH_DNA-bd_sf"/>
</dbReference>
<dbReference type="PANTHER" id="PTHR34824">
    <property type="entry name" value="HEAT-INDUCIBLE TRANSCRIPTION REPRESSOR HRCA"/>
    <property type="match status" value="1"/>
</dbReference>
<dbReference type="PANTHER" id="PTHR34824:SF1">
    <property type="entry name" value="HEAT-INDUCIBLE TRANSCRIPTION REPRESSOR HRCA"/>
    <property type="match status" value="1"/>
</dbReference>
<dbReference type="Pfam" id="PF01628">
    <property type="entry name" value="HrcA"/>
    <property type="match status" value="1"/>
</dbReference>
<dbReference type="PIRSF" id="PIRSF005485">
    <property type="entry name" value="HrcA"/>
    <property type="match status" value="1"/>
</dbReference>
<dbReference type="SUPFAM" id="SSF55781">
    <property type="entry name" value="GAF domain-like"/>
    <property type="match status" value="1"/>
</dbReference>
<dbReference type="SUPFAM" id="SSF46785">
    <property type="entry name" value="Winged helix' DNA-binding domain"/>
    <property type="match status" value="1"/>
</dbReference>
<proteinExistence type="inferred from homology"/>
<feature type="chain" id="PRO_0000182504" description="Heat-inducible transcription repressor HrcA">
    <location>
        <begin position="1"/>
        <end position="335"/>
    </location>
</feature>
<evidence type="ECO:0000255" key="1">
    <source>
        <dbReference type="HAMAP-Rule" id="MF_00081"/>
    </source>
</evidence>
<keyword id="KW-0678">Repressor</keyword>
<keyword id="KW-0346">Stress response</keyword>
<keyword id="KW-0804">Transcription</keyword>
<keyword id="KW-0805">Transcription regulation</keyword>
<gene>
    <name evidence="1" type="primary">hrcA</name>
    <name type="ordered locus">mhp010</name>
</gene>
<protein>
    <recommendedName>
        <fullName evidence="1">Heat-inducible transcription repressor HrcA</fullName>
    </recommendedName>
</protein>
<accession>Q602E0</accession>
<organism>
    <name type="scientific">Mesomycoplasma hyopneumoniae (strain 232)</name>
    <name type="common">Mycoplasma hyopneumoniae</name>
    <dbReference type="NCBI Taxonomy" id="295358"/>
    <lineage>
        <taxon>Bacteria</taxon>
        <taxon>Bacillati</taxon>
        <taxon>Mycoplasmatota</taxon>
        <taxon>Mycoplasmoidales</taxon>
        <taxon>Metamycoplasmataceae</taxon>
        <taxon>Mesomycoplasma</taxon>
    </lineage>
</organism>
<sequence length="335" mass="38456">MPKLDSKKEKYLKQIVENFIKTGESIGSLNLKQSYGIKKSPSYLRAIMNQLEKEGFLEKSHSSSGRIPTLQGFQYYAEFLSFDENENLANKLKDLFARRRINIENTISEAVKLISESVGTTLIATTNNENERLMSINLTQISQNEGIIVVVSSSGNVENKKITFSEQIPRQDVKIAIRLFQERLINTPLLEISSKLAILKQELEKQIKHSDELLHHFMEKIFNFQVQNKSNIYNKNSLILDKEISRAKLVDLLYIIEKKSIWEMLEDRTTKDDDTLKISIKSPEVSFISKKFEKFLPIKEISMVGAAKKINYSAARTGIKLLEDFLSNKSKIRKG</sequence>
<comment type="function">
    <text evidence="1">Negative regulator of class I heat shock genes (grpE-dnaK-dnaJ and groELS operons). Prevents heat-shock induction of these operons.</text>
</comment>
<comment type="similarity">
    <text evidence="1">Belongs to the HrcA family.</text>
</comment>